<dbReference type="EMBL" id="U10556">
    <property type="protein sequence ID" value="AAB68895.1"/>
    <property type="molecule type" value="Genomic_DNA"/>
</dbReference>
<dbReference type="EMBL" id="BK006934">
    <property type="protein sequence ID" value="DAA06775.1"/>
    <property type="molecule type" value="Genomic_DNA"/>
</dbReference>
<dbReference type="PIR" id="S46817">
    <property type="entry name" value="S46817"/>
</dbReference>
<dbReference type="RefSeq" id="NP_011948.1">
    <property type="nucleotide sequence ID" value="NM_001179210.1"/>
</dbReference>
<dbReference type="PDB" id="5YQJ">
    <property type="method" value="X-ray"/>
    <property type="resolution" value="1.50 A"/>
    <property type="chains" value="A/B/C=749-929"/>
</dbReference>
<dbReference type="PDB" id="5YQP">
    <property type="method" value="X-ray"/>
    <property type="resolution" value="1.70 A"/>
    <property type="chains" value="A/B=953-1137"/>
</dbReference>
<dbReference type="PDB" id="6BYD">
    <property type="method" value="X-ray"/>
    <property type="resolution" value="2.19 A"/>
    <property type="chains" value="A=946-1145"/>
</dbReference>
<dbReference type="PDB" id="6BYM">
    <property type="method" value="X-ray"/>
    <property type="resolution" value="2.20 A"/>
    <property type="chains" value="A/B=946-1145"/>
</dbReference>
<dbReference type="PDBsum" id="5YQJ"/>
<dbReference type="PDBsum" id="5YQP"/>
<dbReference type="PDBsum" id="6BYD"/>
<dbReference type="PDBsum" id="6BYM"/>
<dbReference type="SMR" id="P38800"/>
<dbReference type="BioGRID" id="36515">
    <property type="interactions" value="74"/>
</dbReference>
<dbReference type="DIP" id="DIP-5282N"/>
<dbReference type="FunCoup" id="P38800">
    <property type="interactions" value="70"/>
</dbReference>
<dbReference type="IntAct" id="P38800">
    <property type="interactions" value="3"/>
</dbReference>
<dbReference type="MINT" id="P38800"/>
<dbReference type="STRING" id="4932.YHR080C"/>
<dbReference type="TCDB" id="9.B.198.2.2">
    <property type="family name" value="the membrane-anchored lipid-binding protein (lam) family"/>
</dbReference>
<dbReference type="iPTMnet" id="P38800"/>
<dbReference type="PaxDb" id="4932-YHR080C"/>
<dbReference type="PeptideAtlas" id="P38800"/>
<dbReference type="EnsemblFungi" id="YHR080C_mRNA">
    <property type="protein sequence ID" value="YHR080C"/>
    <property type="gene ID" value="YHR080C"/>
</dbReference>
<dbReference type="GeneID" id="856480"/>
<dbReference type="KEGG" id="sce:YHR080C"/>
<dbReference type="AGR" id="SGD:S000001122"/>
<dbReference type="SGD" id="S000001122">
    <property type="gene designation" value="LAM4"/>
</dbReference>
<dbReference type="VEuPathDB" id="FungiDB:YHR080C"/>
<dbReference type="eggNOG" id="KOG1032">
    <property type="taxonomic scope" value="Eukaryota"/>
</dbReference>
<dbReference type="GeneTree" id="ENSGT00940000172082"/>
<dbReference type="HOGENOM" id="CLU_002908_0_0_1"/>
<dbReference type="InParanoid" id="P38800"/>
<dbReference type="OMA" id="TLPKMEP"/>
<dbReference type="OrthoDB" id="2162691at2759"/>
<dbReference type="BioCyc" id="YEAST:G3O-31127-MONOMER"/>
<dbReference type="BioGRID-ORCS" id="856480">
    <property type="hits" value="0 hits in 10 CRISPR screens"/>
</dbReference>
<dbReference type="PRO" id="PR:P38800"/>
<dbReference type="Proteomes" id="UP000002311">
    <property type="component" value="Chromosome VIII"/>
</dbReference>
<dbReference type="RNAct" id="P38800">
    <property type="molecule type" value="protein"/>
</dbReference>
<dbReference type="GO" id="GO:0032541">
    <property type="term" value="C:cortical endoplasmic reticulum"/>
    <property type="evidence" value="ECO:0000314"/>
    <property type="project" value="SGD"/>
</dbReference>
<dbReference type="GO" id="GO:0005789">
    <property type="term" value="C:endoplasmic reticulum membrane"/>
    <property type="evidence" value="ECO:0000318"/>
    <property type="project" value="GO_Central"/>
</dbReference>
<dbReference type="GO" id="GO:0140268">
    <property type="term" value="C:endoplasmic reticulum-plasma membrane contact site"/>
    <property type="evidence" value="ECO:0000318"/>
    <property type="project" value="GO_Central"/>
</dbReference>
<dbReference type="GO" id="GO:0005739">
    <property type="term" value="C:mitochondrion"/>
    <property type="evidence" value="ECO:0007005"/>
    <property type="project" value="SGD"/>
</dbReference>
<dbReference type="GO" id="GO:0005886">
    <property type="term" value="C:plasma membrane"/>
    <property type="evidence" value="ECO:0000318"/>
    <property type="project" value="GO_Central"/>
</dbReference>
<dbReference type="GO" id="GO:0032934">
    <property type="term" value="F:sterol binding"/>
    <property type="evidence" value="ECO:0000314"/>
    <property type="project" value="SGD"/>
</dbReference>
<dbReference type="GO" id="GO:0120015">
    <property type="term" value="F:sterol transfer activity"/>
    <property type="evidence" value="ECO:0000314"/>
    <property type="project" value="SGD"/>
</dbReference>
<dbReference type="GO" id="GO:0032366">
    <property type="term" value="P:intracellular sterol transport"/>
    <property type="evidence" value="ECO:0000318"/>
    <property type="project" value="GO_Central"/>
</dbReference>
<dbReference type="GO" id="GO:0015918">
    <property type="term" value="P:sterol transport"/>
    <property type="evidence" value="ECO:0000315"/>
    <property type="project" value="SGD"/>
</dbReference>
<dbReference type="CDD" id="cd13220">
    <property type="entry name" value="PH-GRAM_GRAMDC"/>
    <property type="match status" value="1"/>
</dbReference>
<dbReference type="Gene3D" id="2.30.29.30">
    <property type="entry name" value="Pleckstrin-homology domain (PH domain)/Phosphotyrosine-binding domain (PTB)"/>
    <property type="match status" value="1"/>
</dbReference>
<dbReference type="InterPro" id="IPR051482">
    <property type="entry name" value="Cholesterol_transport"/>
</dbReference>
<dbReference type="InterPro" id="IPR004182">
    <property type="entry name" value="GRAM"/>
</dbReference>
<dbReference type="InterPro" id="IPR011993">
    <property type="entry name" value="PH-like_dom_sf"/>
</dbReference>
<dbReference type="InterPro" id="IPR031968">
    <property type="entry name" value="VASt"/>
</dbReference>
<dbReference type="PANTHER" id="PTHR23319">
    <property type="entry name" value="GRAM DOMAIN CONTAINING 1B, ISOFORM E"/>
    <property type="match status" value="1"/>
</dbReference>
<dbReference type="PANTHER" id="PTHR23319:SF36">
    <property type="entry name" value="MEMBRANE-ANCHORED LIPID-BINDING PROTEIN LAM4-RELATED"/>
    <property type="match status" value="1"/>
</dbReference>
<dbReference type="Pfam" id="PF02893">
    <property type="entry name" value="GRAM"/>
    <property type="match status" value="1"/>
</dbReference>
<dbReference type="Pfam" id="PF16016">
    <property type="entry name" value="VASt"/>
    <property type="match status" value="2"/>
</dbReference>
<dbReference type="SMART" id="SM00568">
    <property type="entry name" value="GRAM"/>
    <property type="match status" value="1"/>
</dbReference>
<dbReference type="PROSITE" id="PS51778">
    <property type="entry name" value="VAST"/>
    <property type="match status" value="2"/>
</dbReference>
<organism>
    <name type="scientific">Saccharomyces cerevisiae (strain ATCC 204508 / S288c)</name>
    <name type="common">Baker's yeast</name>
    <dbReference type="NCBI Taxonomy" id="559292"/>
    <lineage>
        <taxon>Eukaryota</taxon>
        <taxon>Fungi</taxon>
        <taxon>Dikarya</taxon>
        <taxon>Ascomycota</taxon>
        <taxon>Saccharomycotina</taxon>
        <taxon>Saccharomycetes</taxon>
        <taxon>Saccharomycetales</taxon>
        <taxon>Saccharomycetaceae</taxon>
        <taxon>Saccharomyces</taxon>
    </lineage>
</organism>
<keyword id="KW-0002">3D-structure</keyword>
<keyword id="KW-0256">Endoplasmic reticulum</keyword>
<keyword id="KW-0472">Membrane</keyword>
<keyword id="KW-0597">Phosphoprotein</keyword>
<keyword id="KW-1185">Reference proteome</keyword>
<keyword id="KW-0812">Transmembrane</keyword>
<keyword id="KW-1133">Transmembrane helix</keyword>
<proteinExistence type="evidence at protein level"/>
<accession>P38800</accession>
<accession>D3DL31</accession>
<gene>
    <name evidence="6" type="primary">LAM4</name>
    <name evidence="5" type="synonym">LTC3</name>
    <name evidence="8" type="ordered locus">YHR080C</name>
</gene>
<comment type="function">
    <text evidence="4">May be involved in sterol transfer between intracellular membranes.</text>
</comment>
<comment type="subcellular location">
    <subcellularLocation>
        <location evidence="4">Endoplasmic reticulum membrane</location>
        <topology evidence="1">Single-pass membrane protein</topology>
    </subcellularLocation>
    <text evidence="4">Localizes to puncta in the cell periphery representing cortical endoplasmic reticulum (cER)-plasma membrane (PM) membrane contact sites.</text>
</comment>
<comment type="domain">
    <text evidence="4">The VASt domains bind sterols.</text>
</comment>
<comment type="similarity">
    <text evidence="7">Belongs to the YSP2 family.</text>
</comment>
<sequence>MTRDSKKKHHWGTAFLRTIGVKRKHKKDRNFLNNTTGENVSTTASAERFRRVGGNPDIPSLLKPETFTESPAKGSQKAAASSLAHSQGVFNIPIVIDPMETNRLEKTNTNLTAGSLKGRFQDGNSNSNSVPSLSVQALEKEKLQSGKREGSSNQAEEKTPDGHDEHTAFETFLSFAHNAVSHIPKINVQDADNGTISRNEPKDRKKNSSNISGALSENSTNNKNTSSTKESDGPFLKNLDNILAASKSSTPSNQQLNTTEAGSKSKPSSLSRLAFGNLKGHIHSNSHSSSNAISGDDTSLDDTRKMTDDMARKVVFEPIRHSHDKPTPGVGNLKLEHFDDSQATLEGLEAMSAESLPEADHLDSRGPVQQSNLERKTVPSKWSVVSSSTTDGVKPRRRAKSMISAMADKQNTSSDVLQDCKKRLSFNSSNGLTNNDPEYEDREPREMSKKFLNRRSFSPGSISMGMKVLPSTALKYSLNKVKNSTDIASTIIPRPSMSNGRPSSGLRRSSSKSFSSTPVNIIEPSEENGRQSSIRIKGVEYASEKKDAEFHAIFKDSGVSPNERLILDHSCALSRDILLQGRMYISDQHIGFYSNILGWVSTVFIPFKTIVQIEKRATAGIFPNGIVIDTLHTKYTFASFTSRDATYDLITEVWNQIILGKRFRSNSNNTNSSSNSISDDENDDYDDDYDDYGDDDDDLYDNSNNISDSTDMTSSVSIGKPEDLPMPLQTDTPYGTGIPPLGPKIHSPTETVYKPAPNEKLVNESTIHASLGRVVNILFGKDVSYIMAILKAQKNSDISPIPVLVDSPTVSEGKKRDYSYVKTTPGAIGPGKTKCMITETIQHFNLEEYVQVLQTTKTPDVPSGNSFYVRTVYLLSWANNNETKLKLYVSVEWTGKSLIKSPIEKGTFDGVTDATKILVEELGNILTRSATKRKRSSKENTVTVSTLPKMEPSSHAPTEPDIQKDKDDSIIRENENIPAPLGTVVQLLFGSNTEYMQKVITRDKNNVNVETIPKFTPSLVEGGSRHYEYTKKLNNSIGPKQTKCLLTESIEHMDINNYVLVTQTTKTPDVPSGSNFAVESKIFLFWGQHDTTNMTVITKINWTSKSFLKGAIEKGSVEGQKVSVDYMLSELRDIISRAKSKKPVKKVMKSHDKHRPFHSKVEQKSSESRKSDDNKDILTHILDFVQNNFSSEIFMNKLLSPQKLFLILGLTIMLFWSPRLHVFQEKNNLQIIKPGRLLIDGQEYNYVPSFGTLYNSYENAISSKKKRENVNYARDKSPIVGRESDIWDWISNRGSAISPRGRAMLRNDDEHKLQQLSESIKITEMQLNHMKTMLDNIERDANDLS</sequence>
<feature type="chain" id="PRO_0000202901" description="Membrane-anchored lipid-binding protein LAM4">
    <location>
        <begin position="1"/>
        <end position="1345"/>
    </location>
</feature>
<feature type="topological domain" description="Cytoplasmic" evidence="7">
    <location>
        <begin position="1"/>
        <end position="1197"/>
    </location>
</feature>
<feature type="transmembrane region" description="Helical" evidence="1">
    <location>
        <begin position="1198"/>
        <end position="1218"/>
    </location>
</feature>
<feature type="topological domain" description="Lumenal" evidence="7">
    <location>
        <begin position="1219"/>
        <end position="1345"/>
    </location>
</feature>
<feature type="domain" description="GRAM" evidence="1">
    <location>
        <begin position="549"/>
        <end position="616"/>
    </location>
</feature>
<feature type="domain" description="VASt 1" evidence="2">
    <location>
        <begin position="758"/>
        <end position="930"/>
    </location>
</feature>
<feature type="domain" description="VASt 2" evidence="2">
    <location>
        <begin position="967"/>
        <end position="1139"/>
    </location>
</feature>
<feature type="region of interest" description="Disordered" evidence="3">
    <location>
        <begin position="51"/>
        <end position="80"/>
    </location>
</feature>
<feature type="region of interest" description="Disordered" evidence="3">
    <location>
        <begin position="115"/>
        <end position="134"/>
    </location>
</feature>
<feature type="region of interest" description="Disordered" evidence="3">
    <location>
        <begin position="139"/>
        <end position="164"/>
    </location>
</feature>
<feature type="region of interest" description="Disordered" evidence="3">
    <location>
        <begin position="190"/>
        <end position="302"/>
    </location>
</feature>
<feature type="region of interest" description="Disordered" evidence="3">
    <location>
        <begin position="356"/>
        <end position="397"/>
    </location>
</feature>
<feature type="region of interest" description="Disordered" evidence="3">
    <location>
        <begin position="425"/>
        <end position="447"/>
    </location>
</feature>
<feature type="region of interest" description="Disordered" evidence="3">
    <location>
        <begin position="489"/>
        <end position="531"/>
    </location>
</feature>
<feature type="region of interest" description="Disordered" evidence="3">
    <location>
        <begin position="665"/>
        <end position="722"/>
    </location>
</feature>
<feature type="region of interest" description="Disordered" evidence="3">
    <location>
        <begin position="930"/>
        <end position="963"/>
    </location>
</feature>
<feature type="region of interest" description="Disordered" evidence="3">
    <location>
        <begin position="1141"/>
        <end position="1172"/>
    </location>
</feature>
<feature type="compositionally biased region" description="Low complexity" evidence="3">
    <location>
        <begin position="216"/>
        <end position="228"/>
    </location>
</feature>
<feature type="compositionally biased region" description="Polar residues" evidence="3">
    <location>
        <begin position="246"/>
        <end position="271"/>
    </location>
</feature>
<feature type="compositionally biased region" description="Low complexity" evidence="3">
    <location>
        <begin position="283"/>
        <end position="294"/>
    </location>
</feature>
<feature type="compositionally biased region" description="Polar residues" evidence="3">
    <location>
        <begin position="425"/>
        <end position="436"/>
    </location>
</feature>
<feature type="compositionally biased region" description="Low complexity" evidence="3">
    <location>
        <begin position="498"/>
        <end position="516"/>
    </location>
</feature>
<feature type="compositionally biased region" description="Low complexity" evidence="3">
    <location>
        <begin position="665"/>
        <end position="677"/>
    </location>
</feature>
<feature type="compositionally biased region" description="Acidic residues" evidence="3">
    <location>
        <begin position="678"/>
        <end position="700"/>
    </location>
</feature>
<feature type="compositionally biased region" description="Basic residues" evidence="3">
    <location>
        <begin position="1141"/>
        <end position="1158"/>
    </location>
</feature>
<feature type="compositionally biased region" description="Basic and acidic residues" evidence="3">
    <location>
        <begin position="1159"/>
        <end position="1172"/>
    </location>
</feature>
<feature type="modified residue" description="Phosphothreonine" evidence="11">
    <location>
        <position position="66"/>
    </location>
</feature>
<feature type="modified residue" description="Phosphoserine" evidence="9 10">
    <location>
        <position position="747"/>
    </location>
</feature>
<feature type="mutagenesis site" description="Abolishes the ability to bind sterol." evidence="4">
    <original>G</original>
    <variation>R</variation>
    <location>
        <position position="1119"/>
    </location>
</feature>
<feature type="strand" evidence="12">
    <location>
        <begin position="760"/>
        <end position="769"/>
    </location>
</feature>
<feature type="helix" evidence="12">
    <location>
        <begin position="771"/>
        <end position="779"/>
    </location>
</feature>
<feature type="helix" evidence="12">
    <location>
        <begin position="784"/>
        <end position="792"/>
    </location>
</feature>
<feature type="strand" evidence="12">
    <location>
        <begin position="815"/>
        <end position="826"/>
    </location>
</feature>
<feature type="strand" evidence="12">
    <location>
        <begin position="829"/>
        <end position="845"/>
    </location>
</feature>
<feature type="turn" evidence="12">
    <location>
        <begin position="846"/>
        <end position="848"/>
    </location>
</feature>
<feature type="strand" evidence="12">
    <location>
        <begin position="849"/>
        <end position="857"/>
    </location>
</feature>
<feature type="turn" evidence="12">
    <location>
        <begin position="862"/>
        <end position="865"/>
    </location>
</feature>
<feature type="strand" evidence="12">
    <location>
        <begin position="866"/>
        <end position="881"/>
    </location>
</feature>
<feature type="strand" evidence="12">
    <location>
        <begin position="883"/>
        <end position="893"/>
    </location>
</feature>
<feature type="helix" evidence="12">
    <location>
        <begin position="900"/>
        <end position="926"/>
    </location>
</feature>
<feature type="strand" evidence="13">
    <location>
        <begin position="969"/>
        <end position="979"/>
    </location>
</feature>
<feature type="helix" evidence="13">
    <location>
        <begin position="981"/>
        <end position="989"/>
    </location>
</feature>
<feature type="helix" evidence="13">
    <location>
        <begin position="994"/>
        <end position="1001"/>
    </location>
</feature>
<feature type="strand" evidence="13">
    <location>
        <begin position="1006"/>
        <end position="1008"/>
    </location>
</feature>
<feature type="strand" evidence="13">
    <location>
        <begin position="1024"/>
        <end position="1032"/>
    </location>
</feature>
<feature type="strand" evidence="13">
    <location>
        <begin position="1035"/>
        <end position="1038"/>
    </location>
</feature>
<feature type="strand" evidence="13">
    <location>
        <begin position="1040"/>
        <end position="1053"/>
    </location>
</feature>
<feature type="strand" evidence="13">
    <location>
        <begin position="1057"/>
        <end position="1066"/>
    </location>
</feature>
<feature type="helix" evidence="13">
    <location>
        <begin position="1073"/>
        <end position="1075"/>
    </location>
</feature>
<feature type="strand" evidence="13">
    <location>
        <begin position="1076"/>
        <end position="1086"/>
    </location>
</feature>
<feature type="strand" evidence="13">
    <location>
        <begin position="1088"/>
        <end position="1090"/>
    </location>
</feature>
<feature type="strand" evidence="13">
    <location>
        <begin position="1092"/>
        <end position="1104"/>
    </location>
</feature>
<feature type="helix" evidence="13">
    <location>
        <begin position="1109"/>
        <end position="1136"/>
    </location>
</feature>
<protein>
    <recommendedName>
        <fullName evidence="6">Membrane-anchored lipid-binding protein LAM4</fullName>
    </recommendedName>
    <alternativeName>
        <fullName evidence="5">Lipid transfer at contact site protein 3</fullName>
    </alternativeName>
    <alternativeName>
        <fullName evidence="6">Lipid transfer protein anchored at membrane contact sites 1</fullName>
    </alternativeName>
</protein>
<evidence type="ECO:0000255" key="1"/>
<evidence type="ECO:0000255" key="2">
    <source>
        <dbReference type="PROSITE-ProRule" id="PRU01114"/>
    </source>
</evidence>
<evidence type="ECO:0000256" key="3">
    <source>
        <dbReference type="SAM" id="MobiDB-lite"/>
    </source>
</evidence>
<evidence type="ECO:0000269" key="4">
    <source>
    </source>
</evidence>
<evidence type="ECO:0000303" key="5">
    <source>
    </source>
</evidence>
<evidence type="ECO:0000303" key="6">
    <source>
    </source>
</evidence>
<evidence type="ECO:0000305" key="7"/>
<evidence type="ECO:0000312" key="8">
    <source>
        <dbReference type="SGD" id="S000001122"/>
    </source>
</evidence>
<evidence type="ECO:0007744" key="9">
    <source>
    </source>
</evidence>
<evidence type="ECO:0007744" key="10">
    <source>
    </source>
</evidence>
<evidence type="ECO:0007744" key="11">
    <source>
    </source>
</evidence>
<evidence type="ECO:0007829" key="12">
    <source>
        <dbReference type="PDB" id="5YQJ"/>
    </source>
</evidence>
<evidence type="ECO:0007829" key="13">
    <source>
        <dbReference type="PDB" id="5YQP"/>
    </source>
</evidence>
<reference key="1">
    <citation type="journal article" date="1994" name="Science">
        <title>Complete nucleotide sequence of Saccharomyces cerevisiae chromosome VIII.</title>
        <authorList>
            <person name="Johnston M."/>
            <person name="Andrews S."/>
            <person name="Brinkman R."/>
            <person name="Cooper J."/>
            <person name="Ding H."/>
            <person name="Dover J."/>
            <person name="Du Z."/>
            <person name="Favello A."/>
            <person name="Fulton L."/>
            <person name="Gattung S."/>
            <person name="Geisel C."/>
            <person name="Kirsten J."/>
            <person name="Kucaba T."/>
            <person name="Hillier L.W."/>
            <person name="Jier M."/>
            <person name="Johnston L."/>
            <person name="Langston Y."/>
            <person name="Latreille P."/>
            <person name="Louis E.J."/>
            <person name="Macri C."/>
            <person name="Mardis E."/>
            <person name="Menezes S."/>
            <person name="Mouser L."/>
            <person name="Nhan M."/>
            <person name="Rifkin L."/>
            <person name="Riles L."/>
            <person name="St Peter H."/>
            <person name="Trevaskis E."/>
            <person name="Vaughan K."/>
            <person name="Vignati D."/>
            <person name="Wilcox L."/>
            <person name="Wohldman P."/>
            <person name="Waterston R."/>
            <person name="Wilson R."/>
            <person name="Vaudin M."/>
        </authorList>
    </citation>
    <scope>NUCLEOTIDE SEQUENCE [LARGE SCALE GENOMIC DNA]</scope>
    <source>
        <strain>ATCC 204508 / S288c</strain>
    </source>
</reference>
<reference key="2">
    <citation type="journal article" date="2014" name="G3 (Bethesda)">
        <title>The reference genome sequence of Saccharomyces cerevisiae: Then and now.</title>
        <authorList>
            <person name="Engel S.R."/>
            <person name="Dietrich F.S."/>
            <person name="Fisk D.G."/>
            <person name="Binkley G."/>
            <person name="Balakrishnan R."/>
            <person name="Costanzo M.C."/>
            <person name="Dwight S.S."/>
            <person name="Hitz B.C."/>
            <person name="Karra K."/>
            <person name="Nash R.S."/>
            <person name="Weng S."/>
            <person name="Wong E.D."/>
            <person name="Lloyd P."/>
            <person name="Skrzypek M.S."/>
            <person name="Miyasato S.R."/>
            <person name="Simison M."/>
            <person name="Cherry J.M."/>
        </authorList>
    </citation>
    <scope>GENOME REANNOTATION</scope>
    <source>
        <strain>ATCC 204508 / S288c</strain>
    </source>
</reference>
<reference key="3">
    <citation type="journal article" date="2007" name="J. Proteome Res.">
        <title>Large-scale phosphorylation analysis of alpha-factor-arrested Saccharomyces cerevisiae.</title>
        <authorList>
            <person name="Li X."/>
            <person name="Gerber S.A."/>
            <person name="Rudner A.D."/>
            <person name="Beausoleil S.A."/>
            <person name="Haas W."/>
            <person name="Villen J."/>
            <person name="Elias J.E."/>
            <person name="Gygi S.P."/>
        </authorList>
    </citation>
    <scope>PHOSPHORYLATION [LARGE SCALE ANALYSIS] AT SER-747</scope>
    <scope>IDENTIFICATION BY MASS SPECTROMETRY [LARGE SCALE ANALYSIS]</scope>
    <source>
        <strain>ADR376</strain>
    </source>
</reference>
<reference key="4">
    <citation type="journal article" date="2008" name="Mol. Cell. Proteomics">
        <title>A multidimensional chromatography technology for in-depth phosphoproteome analysis.</title>
        <authorList>
            <person name="Albuquerque C.P."/>
            <person name="Smolka M.B."/>
            <person name="Payne S.H."/>
            <person name="Bafna V."/>
            <person name="Eng J."/>
            <person name="Zhou H."/>
        </authorList>
    </citation>
    <scope>PHOSPHORYLATION [LARGE SCALE ANALYSIS] AT SER-747</scope>
    <scope>IDENTIFICATION BY MASS SPECTROMETRY [LARGE SCALE ANALYSIS]</scope>
</reference>
<reference key="5">
    <citation type="journal article" date="2009" name="Science">
        <title>Global analysis of Cdk1 substrate phosphorylation sites provides insights into evolution.</title>
        <authorList>
            <person name="Holt L.J."/>
            <person name="Tuch B.B."/>
            <person name="Villen J."/>
            <person name="Johnson A.D."/>
            <person name="Gygi S.P."/>
            <person name="Morgan D.O."/>
        </authorList>
    </citation>
    <scope>PHOSPHORYLATION [LARGE SCALE ANALYSIS] AT THR-66</scope>
    <scope>IDENTIFICATION BY MASS SPECTROMETRY [LARGE SCALE ANALYSIS]</scope>
</reference>
<reference key="6">
    <citation type="journal article" date="2015" name="Elife">
        <title>A new family of StART domain proteins at membrane contact sites has a role in ER-PM sterol transport.</title>
        <authorList>
            <person name="Gatta A.T."/>
            <person name="Wong L.H."/>
            <person name="Sere Y.Y."/>
            <person name="Calderon-Norena D.M."/>
            <person name="Cockcroft S."/>
            <person name="Menon A.K."/>
            <person name="Levine T.P."/>
        </authorList>
    </citation>
    <scope>FUNCTION</scope>
    <scope>SUBCELLULAR LOCATION</scope>
    <scope>MUTAGENESIS OF GLY-1119</scope>
</reference>
<reference key="7">
    <citation type="journal article" date="2015" name="J. Cell Biol.">
        <title>Ltc1 is an ER-localized sterol transporter and a component of ER-mitochondria and ER-vacuole contacts.</title>
        <authorList>
            <person name="Murley A."/>
            <person name="Sarsam R.D."/>
            <person name="Toulmay A."/>
            <person name="Yamada J."/>
            <person name="Prinz W.A."/>
            <person name="Nunnari J."/>
        </authorList>
    </citation>
    <scope>GENE FAMILY</scope>
</reference>
<name>LAM4_YEAST</name>